<sequence>MTTRFPHLTDGHPVEDTTLQSITLDVGYYPSLRSTSTEQKIHVLTIAWSILLFAYEENDSVRFGLEREDGWSCVAVDVHQEVRWQDLTVKGHGVLGEDSGVNTGVCLGGQIPMELQLVLCMDGSDSDSDSSLSMVYQPCLLSAGQAANVASTVEAILQALQGPNVPVGEIDMLGQRHVECIAGFNLAGRDLPAGCLHGIVEGQVRENGDRAAVDAWDGRLTYRELDVYATQLSGYLVSLGLAGSFVPLCADKSVWAVVAMLAILKAGAACSPLEPSHPRSRLESMVQTCGARAVLVTEGYASLFQMDGVEVVVVSPDVLALVQQTGTSLEISPTQGSAAFLMWTSGSTGAPKGVVLEHPALSSSITAYATASQFTPRTRTFQFTSFTFTVSLCDLFGTMSRGGCVCLPSEAQRLNDLAGALRDFRATFCWLTSTSLASLHPSQVPDLRSITVGGESLAEEIVARWASRCRLTVSYGTTETCGWCLLNPGLSPTSDARILGKPTIPAAWITHPDDPNRLVPIGAVGELLVEGPFLARGYLHDEERTAAQFIPPPAWMARFRPGETTRLYRTNDLVRYNSDGSIRFAGRRQAHAKIRGNRINLTEIESHVRRACGTADVVVDVVSTRDRVDVLTAFMLSPGPRQPLDGPLIQQADDGFRQIVESALHGLEDSLPSTMIPTAFVPLSRLPLTRTNKADRRLLREQAGQMSRAELAQLAAHNRAPAESPMTAAERVMQQLWSELMGLPLSSIGAKDSFFHLGGDSVLAIRLVPMAREHGLFLTVLDVFHHPRLGDLVAHIKDAGSPGPDTWTASPTAAEDVEHLKPEVARQCGVRPSDIEDVYPCTTLQEGLMALSAQRAGAYILTMAYEIPPAVDVARLQEAWQTVVRALPILRTRIVHLPSIGFHQAVVDEPIAWHFVSSEDEFRQSNRSNSMSLGSRLARFALLQPDSAPARLLLAVHHSIFDRWSAPLLLAEVEKAYAGQAVAQQHFRGFVAYVCSRPAEESDAFWRDRLADASPTVFPRLPDATYLPNPTSSRDTMVVLSSSRSDFTATSRLRLCWALLLSQHTGNTDVVFGAVSTGRSAPVAGIESLIGPTLATVPLRVQINGDASVADALQSLQEDATAMLPHEQRGLQNIVRIGPEAKAACAFQSLLIVHASNSGSKLDLMGMMEDEQLPELFSYGLTLSCEVQGPDRIHLQAFFDPRMIEEGYVEVLLSQLTHAMRQVNDVPDCKLDDLNLVSPLDEERLRTWNTAWSPAQVCVHEAIQKQSYAQPQAEAVCSWDGSLTYASLDERSSRLASQLHSRGVKQGAFVPLLLEKSKWTPVAMLAVMKAGGAFVLLDASFPVERLQSICNQLDAPIVVSSEKHRLLAGQLSRDLLLVSAMDSDAPLTSLPPVHPDDAVYAVFTSGSTGTPKGVIINHASYATGAHAHTTPASITPTARVLQFASYAFDASIIEHLTTLMAGGCVCIISDEERTSSLAEAVAARKATWTWLTPSVVRALEPRDFPSLTHLCLMGESMGRTEIERWSGHVHLMQAYGPAECSVLATLEPTLTGQSDPRNIGTPRGCNAWIVDRDDHTRLAPVGTIGELLIEGPIVGRGYHGDVVQTQAAFCEAPEWIRQFRPGQATPARVYKTGDLVQYSSRMDGSLLYIARKDTQVKIRGQRLELSEVEYHARTAMASSSDIVVDVVSPGGRQMLALFYTDDVMHDSPCMALPMTPDQRRFLSQVRPALEARLPSFMVPTLWIPVTRIPLSPSRKTDRRRLQSLVGDLTPDEYKPYIIASTSNSTQSLSKGEMKQHLSEHEILLQRLIWQVLEGDECSSPRPRPPISMDELFVNIGGDSLGALSLTSLAKQSGFTFMAGDVLGCTLGELARMRQE</sequence>
<proteinExistence type="evidence at protein level"/>
<keyword id="KW-0436">Ligase</keyword>
<keyword id="KW-0596">Phosphopantetheine</keyword>
<keyword id="KW-0597">Phosphoprotein</keyword>
<keyword id="KW-1185">Reference proteome</keyword>
<keyword id="KW-0677">Repeat</keyword>
<keyword id="KW-0843">Virulence</keyword>
<accession>A0A1R3RGK1</accession>
<reference key="1">
    <citation type="journal article" date="2017" name="Genome Biol.">
        <title>Comparative genomics reveals high biological diversity and specific adaptations in the industrially and medically important fungal genus Aspergillus.</title>
        <authorList>
            <person name="de Vries R.P."/>
            <person name="Riley R."/>
            <person name="Wiebenga A."/>
            <person name="Aguilar-Osorio G."/>
            <person name="Amillis S."/>
            <person name="Uchima C.A."/>
            <person name="Anderluh G."/>
            <person name="Asadollahi M."/>
            <person name="Askin M."/>
            <person name="Barry K."/>
            <person name="Battaglia E."/>
            <person name="Bayram O."/>
            <person name="Benocci T."/>
            <person name="Braus-Stromeyer S.A."/>
            <person name="Caldana C."/>
            <person name="Canovas D."/>
            <person name="Cerqueira G.C."/>
            <person name="Chen F."/>
            <person name="Chen W."/>
            <person name="Choi C."/>
            <person name="Clum A."/>
            <person name="Dos Santos R.A."/>
            <person name="Damasio A.R."/>
            <person name="Diallinas G."/>
            <person name="Emri T."/>
            <person name="Fekete E."/>
            <person name="Flipphi M."/>
            <person name="Freyberg S."/>
            <person name="Gallo A."/>
            <person name="Gournas C."/>
            <person name="Habgood R."/>
            <person name="Hainaut M."/>
            <person name="Harispe M.L."/>
            <person name="Henrissat B."/>
            <person name="Hilden K.S."/>
            <person name="Hope R."/>
            <person name="Hossain A."/>
            <person name="Karabika E."/>
            <person name="Karaffa L."/>
            <person name="Karanyi Z."/>
            <person name="Krasevec N."/>
            <person name="Kuo A."/>
            <person name="Kusch H."/>
            <person name="LaButti K."/>
            <person name="Lagendijk E.L."/>
            <person name="Lapidus A."/>
            <person name="Levasseur A."/>
            <person name="Lindquist E."/>
            <person name="Lipzen A."/>
            <person name="Logrieco A.F."/>
            <person name="MacCabe A."/>
            <person name="Maekelae M.R."/>
            <person name="Malavazi I."/>
            <person name="Melin P."/>
            <person name="Meyer V."/>
            <person name="Mielnichuk N."/>
            <person name="Miskei M."/>
            <person name="Molnar A.P."/>
            <person name="Mule G."/>
            <person name="Ngan C.Y."/>
            <person name="Orejas M."/>
            <person name="Orosz E."/>
            <person name="Ouedraogo J.P."/>
            <person name="Overkamp K.M."/>
            <person name="Park H.-S."/>
            <person name="Perrone G."/>
            <person name="Piumi F."/>
            <person name="Punt P.J."/>
            <person name="Ram A.F."/>
            <person name="Ramon A."/>
            <person name="Rauscher S."/>
            <person name="Record E."/>
            <person name="Riano-Pachon D.M."/>
            <person name="Robert V."/>
            <person name="Roehrig J."/>
            <person name="Ruller R."/>
            <person name="Salamov A."/>
            <person name="Salih N.S."/>
            <person name="Samson R.A."/>
            <person name="Sandor E."/>
            <person name="Sanguinetti M."/>
            <person name="Schuetze T."/>
            <person name="Sepcic K."/>
            <person name="Shelest E."/>
            <person name="Sherlock G."/>
            <person name="Sophianopoulou V."/>
            <person name="Squina F.M."/>
            <person name="Sun H."/>
            <person name="Susca A."/>
            <person name="Todd R.B."/>
            <person name="Tsang A."/>
            <person name="Unkles S.E."/>
            <person name="van de Wiele N."/>
            <person name="van Rossen-Uffink D."/>
            <person name="Oliveira J.V."/>
            <person name="Vesth T.C."/>
            <person name="Visser J."/>
            <person name="Yu J.-H."/>
            <person name="Zhou M."/>
            <person name="Andersen M.R."/>
            <person name="Archer D.B."/>
            <person name="Baker S.E."/>
            <person name="Benoit I."/>
            <person name="Brakhage A.A."/>
            <person name="Braus G.H."/>
            <person name="Fischer R."/>
            <person name="Frisvad J.C."/>
            <person name="Goldman G.H."/>
            <person name="Houbraken J."/>
            <person name="Oakley B."/>
            <person name="Pocsi I."/>
            <person name="Scazzocchio C."/>
            <person name="Seiboth B."/>
            <person name="vanKuyk P.A."/>
            <person name="Wortman J."/>
            <person name="Dyer P.S."/>
            <person name="Grigoriev I.V."/>
        </authorList>
    </citation>
    <scope>NUCLEOTIDE SEQUENCE [LARGE SCALE GENOMIC DNA]</scope>
    <source>
        <strain>ITEM 5010</strain>
    </source>
</reference>
<reference key="2">
    <citation type="journal article" date="2012" name="Appl. Environ. Microbiol.">
        <title>New insight into the ochratoxin A biosynthetic pathway through deletion of a nonribosomal peptide synthetase gene in Aspergillus carbonarius.</title>
        <authorList>
            <person name="Gallo A."/>
            <person name="Bruno K.S."/>
            <person name="Solfrizzo M."/>
            <person name="Perrone G."/>
            <person name="Mule G."/>
            <person name="Visconti A."/>
            <person name="Baker S.E."/>
        </authorList>
    </citation>
    <scope>FUNCTION</scope>
    <scope>DISRUPTION PHENOTYPE</scope>
    <scope>DOMAIN</scope>
</reference>
<reference key="3">
    <citation type="journal article" date="2016" name="Toxins">
        <title>Essential oils modulate gene expression and ochratoxin A production in Aspergillus carbonarius.</title>
        <authorList>
            <person name="El Khoury R."/>
            <person name="Atoui A."/>
            <person name="Verheecke C."/>
            <person name="Maroun R."/>
            <person name="El Khoury A."/>
            <person name="Mathieu F."/>
        </authorList>
    </citation>
    <scope>INDUCTION</scope>
</reference>
<reference key="4">
    <citation type="journal article" date="2018" name="Appl. Environ. Microbiol.">
        <title>A consensus ochratoxin A biosynthetic pathway: insights from the genome sequence of Aspergillus ochraceus and a comparative genomic analysis.</title>
        <authorList>
            <person name="Wang Y."/>
            <person name="Wang L."/>
            <person name="Wu F."/>
            <person name="Liu F."/>
            <person name="Wang Q."/>
            <person name="Zhang X."/>
            <person name="Selvaraj J.N."/>
            <person name="Zhao Y."/>
            <person name="Xing F."/>
            <person name="Yin W.B."/>
            <person name="Liu Y."/>
        </authorList>
    </citation>
    <scope>FUNCTION</scope>
    <scope>DISRUPTION PHENOTYPE</scope>
    <scope>INDUCTION</scope>
    <scope>PATHWAY</scope>
</reference>
<reference key="5">
    <citation type="journal article" date="2020" name="Front. Microbiol.">
        <title>Comparative genomic analysis of ochratoxin A biosynthetic cluster in producing fungi: new evidence of a cyclase gene involvement.</title>
        <authorList>
            <person name="Ferrara M."/>
            <person name="Gallo A."/>
            <person name="Perrone G."/>
            <person name="Magista D."/>
            <person name="Baker S.E."/>
        </authorList>
    </citation>
    <scope>FUNCTION</scope>
</reference>
<reference key="6">
    <citation type="journal article" date="2021" name="Toxins">
        <title>Functional role of Aspergillus carbonarius AcOTAbZIP gene, a bZIP transcription factor within the OTA gene cluster.</title>
        <authorList>
            <person name="Gerin D."/>
            <person name="Garrapa F."/>
            <person name="Ballester A.R."/>
            <person name="Gonzalez-Candelas L."/>
            <person name="De Miccolis Angelini R.M."/>
            <person name="Faretra F."/>
            <person name="Pollastro S."/>
        </authorList>
    </citation>
    <scope>INDUCTION</scope>
</reference>
<reference key="7">
    <citation type="journal article" date="2022" name="Food Microbiol.">
        <title>Three stilbenes make difference to the antifungal effects on ochratoxin A and its precursor production of Aspergillus carbonarius.</title>
        <authorList>
            <person name="Cai X."/>
            <person name="Qi J."/>
            <person name="Xu Z."/>
            <person name="Huang L."/>
            <person name="Li Y."/>
            <person name="Ren X."/>
            <person name="Kong Q."/>
        </authorList>
    </citation>
    <scope>INDUCTION</scope>
    <scope>BIOTECHNOLOGY</scope>
</reference>
<protein>
    <recommendedName>
        <fullName evidence="9">Nonribosomal peptide synthetase otaB</fullName>
        <ecNumber evidence="3">6.3.2.-</ecNumber>
    </recommendedName>
    <alternativeName>
        <fullName evidence="9">Ochratoxin A biosynthesis cluster protein B</fullName>
    </alternativeName>
</protein>
<feature type="chain" id="PRO_0000440606" description="Nonribosomal peptide synthetase otaB">
    <location>
        <begin position="1"/>
        <end position="1875"/>
    </location>
</feature>
<feature type="domain" description="Carrier" evidence="2">
    <location>
        <begin position="724"/>
        <end position="800"/>
    </location>
</feature>
<feature type="region of interest" description="Adenylation 1" evidence="1 11">
    <location>
        <begin position="202"/>
        <end position="590"/>
    </location>
</feature>
<feature type="region of interest" description="Condensation" evidence="1 11">
    <location>
        <begin position="836"/>
        <end position="1245"/>
    </location>
</feature>
<feature type="region of interest" description="Adenylation 2" evidence="1 11">
    <location>
        <begin position="1264"/>
        <end position="1659"/>
    </location>
</feature>
<feature type="modified residue" description="O-(pantetheine 4'-phosphoryl)serine" evidence="2">
    <location>
        <position position="761"/>
    </location>
</feature>
<organism>
    <name type="scientific">Aspergillus carbonarius (strain ITEM 5010)</name>
    <dbReference type="NCBI Taxonomy" id="602072"/>
    <lineage>
        <taxon>Eukaryota</taxon>
        <taxon>Fungi</taxon>
        <taxon>Dikarya</taxon>
        <taxon>Ascomycota</taxon>
        <taxon>Pezizomycotina</taxon>
        <taxon>Eurotiomycetes</taxon>
        <taxon>Eurotiomycetidae</taxon>
        <taxon>Eurotiales</taxon>
        <taxon>Aspergillaceae</taxon>
        <taxon>Aspergillus</taxon>
        <taxon>Aspergillus subgen. Circumdati</taxon>
    </lineage>
</organism>
<gene>
    <name evidence="9" type="primary">otaB</name>
    <name evidence="8" type="synonym">OTAnrps</name>
    <name type="ORF">ASPCADRAFT_132610</name>
</gene>
<dbReference type="EC" id="6.3.2.-" evidence="3"/>
<dbReference type="EMBL" id="KV907504">
    <property type="protein sequence ID" value="OOF93601.1"/>
    <property type="molecule type" value="Genomic_DNA"/>
</dbReference>
<dbReference type="SMR" id="A0A1R3RGK1"/>
<dbReference type="STRING" id="602072.A0A1R3RGK1"/>
<dbReference type="VEuPathDB" id="FungiDB:ASPCADRAFT_132610"/>
<dbReference type="OMA" id="KFHHIIM"/>
<dbReference type="OrthoDB" id="416786at2759"/>
<dbReference type="BioCyc" id="MetaCyc:MONOMER-21061"/>
<dbReference type="Proteomes" id="UP000188318">
    <property type="component" value="Unassembled WGS sequence"/>
</dbReference>
<dbReference type="GO" id="GO:0005737">
    <property type="term" value="C:cytoplasm"/>
    <property type="evidence" value="ECO:0007669"/>
    <property type="project" value="TreeGrafter"/>
</dbReference>
<dbReference type="GO" id="GO:0016874">
    <property type="term" value="F:ligase activity"/>
    <property type="evidence" value="ECO:0007669"/>
    <property type="project" value="UniProtKB-KW"/>
</dbReference>
<dbReference type="GO" id="GO:1904091">
    <property type="term" value="F:non-ribosomal peptide synthetase activity"/>
    <property type="evidence" value="ECO:0000315"/>
    <property type="project" value="UniProt"/>
</dbReference>
<dbReference type="GO" id="GO:0031177">
    <property type="term" value="F:phosphopantetheine binding"/>
    <property type="evidence" value="ECO:0007669"/>
    <property type="project" value="InterPro"/>
</dbReference>
<dbReference type="GO" id="GO:0043041">
    <property type="term" value="P:amino acid activation for nonribosomal peptide biosynthetic process"/>
    <property type="evidence" value="ECO:0007669"/>
    <property type="project" value="TreeGrafter"/>
</dbReference>
<dbReference type="GO" id="GO:1900818">
    <property type="term" value="P:ochratoxin A biosynthetic process"/>
    <property type="evidence" value="ECO:0000315"/>
    <property type="project" value="GO_Central"/>
</dbReference>
<dbReference type="CDD" id="cd05918">
    <property type="entry name" value="A_NRPS_SidN3_like"/>
    <property type="match status" value="2"/>
</dbReference>
<dbReference type="CDD" id="cd19545">
    <property type="entry name" value="FUM14_C_NRPS-like"/>
    <property type="match status" value="1"/>
</dbReference>
<dbReference type="FunFam" id="3.30.300.30:FF:000015">
    <property type="entry name" value="Nonribosomal peptide synthase SidD"/>
    <property type="match status" value="2"/>
</dbReference>
<dbReference type="FunFam" id="1.10.1200.10:FF:000005">
    <property type="entry name" value="Nonribosomal peptide synthetase 1"/>
    <property type="match status" value="1"/>
</dbReference>
<dbReference type="FunFam" id="3.40.50.12780:FF:000014">
    <property type="entry name" value="Nonribosomal peptide synthetase 1"/>
    <property type="match status" value="1"/>
</dbReference>
<dbReference type="Gene3D" id="3.30.300.30">
    <property type="match status" value="2"/>
</dbReference>
<dbReference type="Gene3D" id="1.10.1200.10">
    <property type="entry name" value="ACP-like"/>
    <property type="match status" value="1"/>
</dbReference>
<dbReference type="Gene3D" id="3.30.559.10">
    <property type="entry name" value="Chloramphenicol acetyltransferase-like domain"/>
    <property type="match status" value="1"/>
</dbReference>
<dbReference type="Gene3D" id="3.40.50.12780">
    <property type="entry name" value="N-terminal domain of ligase-like"/>
    <property type="match status" value="2"/>
</dbReference>
<dbReference type="Gene3D" id="3.30.559.30">
    <property type="entry name" value="Nonribosomal peptide synthetase, condensation domain"/>
    <property type="match status" value="1"/>
</dbReference>
<dbReference type="InterPro" id="IPR010071">
    <property type="entry name" value="AA_adenyl_dom"/>
</dbReference>
<dbReference type="InterPro" id="IPR036736">
    <property type="entry name" value="ACP-like_sf"/>
</dbReference>
<dbReference type="InterPro" id="IPR045851">
    <property type="entry name" value="AMP-bd_C_sf"/>
</dbReference>
<dbReference type="InterPro" id="IPR020845">
    <property type="entry name" value="AMP-binding_CS"/>
</dbReference>
<dbReference type="InterPro" id="IPR000873">
    <property type="entry name" value="AMP-dep_synth/lig_dom"/>
</dbReference>
<dbReference type="InterPro" id="IPR042099">
    <property type="entry name" value="ANL_N_sf"/>
</dbReference>
<dbReference type="InterPro" id="IPR023213">
    <property type="entry name" value="CAT-like_dom_sf"/>
</dbReference>
<dbReference type="InterPro" id="IPR001242">
    <property type="entry name" value="Condensatn"/>
</dbReference>
<dbReference type="InterPro" id="IPR020806">
    <property type="entry name" value="PKS_PP-bd"/>
</dbReference>
<dbReference type="InterPro" id="IPR009081">
    <property type="entry name" value="PP-bd_ACP"/>
</dbReference>
<dbReference type="NCBIfam" id="TIGR01733">
    <property type="entry name" value="AA-adenyl-dom"/>
    <property type="match status" value="2"/>
</dbReference>
<dbReference type="PANTHER" id="PTHR45527:SF1">
    <property type="entry name" value="FATTY ACID SYNTHASE"/>
    <property type="match status" value="1"/>
</dbReference>
<dbReference type="PANTHER" id="PTHR45527">
    <property type="entry name" value="NONRIBOSOMAL PEPTIDE SYNTHETASE"/>
    <property type="match status" value="1"/>
</dbReference>
<dbReference type="Pfam" id="PF00501">
    <property type="entry name" value="AMP-binding"/>
    <property type="match status" value="2"/>
</dbReference>
<dbReference type="Pfam" id="PF00668">
    <property type="entry name" value="Condensation"/>
    <property type="match status" value="1"/>
</dbReference>
<dbReference type="Pfam" id="PF00550">
    <property type="entry name" value="PP-binding"/>
    <property type="match status" value="1"/>
</dbReference>
<dbReference type="SMART" id="SM00823">
    <property type="entry name" value="PKS_PP"/>
    <property type="match status" value="1"/>
</dbReference>
<dbReference type="SUPFAM" id="SSF56801">
    <property type="entry name" value="Acetyl-CoA synthetase-like"/>
    <property type="match status" value="2"/>
</dbReference>
<dbReference type="SUPFAM" id="SSF47336">
    <property type="entry name" value="ACP-like"/>
    <property type="match status" value="1"/>
</dbReference>
<dbReference type="SUPFAM" id="SSF52777">
    <property type="entry name" value="CoA-dependent acyltransferases"/>
    <property type="match status" value="2"/>
</dbReference>
<dbReference type="PROSITE" id="PS00455">
    <property type="entry name" value="AMP_BINDING"/>
    <property type="match status" value="1"/>
</dbReference>
<dbReference type="PROSITE" id="PS50075">
    <property type="entry name" value="CARRIER"/>
    <property type="match status" value="1"/>
</dbReference>
<evidence type="ECO:0000255" key="1"/>
<evidence type="ECO:0000255" key="2">
    <source>
        <dbReference type="PROSITE-ProRule" id="PRU00258"/>
    </source>
</evidence>
<evidence type="ECO:0000269" key="3">
    <source>
    </source>
</evidence>
<evidence type="ECO:0000269" key="4">
    <source>
    </source>
</evidence>
<evidence type="ECO:0000269" key="5">
    <source>
    </source>
</evidence>
<evidence type="ECO:0000269" key="6">
    <source>
    </source>
</evidence>
<evidence type="ECO:0000269" key="7">
    <source>
    </source>
</evidence>
<evidence type="ECO:0000303" key="8">
    <source>
    </source>
</evidence>
<evidence type="ECO:0000303" key="9">
    <source>
    </source>
</evidence>
<evidence type="ECO:0000305" key="10"/>
<evidence type="ECO:0000305" key="11">
    <source>
    </source>
</evidence>
<evidence type="ECO:0000305" key="12">
    <source>
    </source>
</evidence>
<name>OTAB_ASPC5</name>
<comment type="function">
    <text evidence="3 5 12">Nonribosomal peptide synthetase; part of the gene cluster that mediates the biosynthesis of ochratoxin A (OTA), a mycotoxin composed of a chlorinated type I polyketide dihydroisocoumarin moiety linked to L-phenylalanine, and demonstrated to have nephrotoxic, immunotoxic, genotoxic, neurotoxic, and teratogenic properties (PubMed:22983973, PubMed:30054361). OtaB is responsible for the linking of phenylalanine to the dihydroisocoumarin ring (PubMed:22983973, PubMed:30054361). The pathway begins with the highly reducing polyketide synthase otaA that catalyzes the formation of the isocoumarin group during the initial stages of biosynthesis, starting from one acetate and 4 malonate units, to originate the characteristic pentaketide skeleton 7-methylmellein (7-MM) of the OTA molecule. The newly identified cyclase otaY might be involved in the polyketide cyclization reaction during the initial steps of the OTA biosynthesis. 7-MM is then oxidized into 7-carboxymellein (also called ochratoxin beta) by the cytochrome P450 monooxygenase otaC. The NRPS encoded by the otaB gene is involved in the linking of phenylalanine to the dihydroisocoumarin ring. The reaction catalyzed by NRPS results in the production of ochratoxin B (OTB), which is the non-chlorinated analog of OTA and which subsequently serves as the substrate of the halogenase otaD for chlorination activity to form the final molecular structure of OTA, containing a chlorine atom in the C-5 position of the molecule (Probable) (PubMed:33391201).</text>
</comment>
<comment type="catalytic activity">
    <reaction evidence="3">
        <text>7-carboxymellein + L-phenylalanine + ATP = ochratoxin B + ADP + phosphate + H(+)</text>
        <dbReference type="Rhea" id="RHEA:72775"/>
        <dbReference type="ChEBI" id="CHEBI:15378"/>
        <dbReference type="ChEBI" id="CHEBI:30616"/>
        <dbReference type="ChEBI" id="CHEBI:43474"/>
        <dbReference type="ChEBI" id="CHEBI:58095"/>
        <dbReference type="ChEBI" id="CHEBI:192525"/>
        <dbReference type="ChEBI" id="CHEBI:192526"/>
        <dbReference type="ChEBI" id="CHEBI:456216"/>
    </reaction>
    <physiologicalReaction direction="left-to-right" evidence="3">
        <dbReference type="Rhea" id="RHEA:72776"/>
    </physiologicalReaction>
</comment>
<comment type="pathway">
    <text evidence="3 5">Mycotoxin biosynthesis.</text>
</comment>
<comment type="induction">
    <text evidence="4 5 6 7">Expression is down-regulated in the presence of fennel, cardamom, chamomile, celery, anise and rosemary essential oils (PubMed:27548221). Expression is positively regulated by the cluster-specific transcription factor otaR1 (PubMed:30054361, PubMed:33540740). Expression is also modulated by a second regulator, otaR2, which is adjacent to the biosynthetic gene cluster (PubMed:30054361). Stilbenes such as resveratrol, piceatannol and pterostilbene downregulate the expression of the ochratoxin cluster (PubMed:35082059).</text>
</comment>
<comment type="domain">
    <text evidence="11">NRP synthetases are composed of discrete domains (adenylation (A), thiolation (T) or peptidyl carrier protein (PCP) and condensation (C) domains) which when grouped together are referred to as a single module. Each module is responsible for the recognition (via the A domain) and incorporation of a single amino acid into the growing peptide product. Thus, an NRP synthetase is generally composed of one or more modules and can terminate in a thioesterase domain (TE) that releases the newly synthesized peptide from the enzyme. Occasionally, epimerase (E) domains (responsible for L- to D- amino acid conversion) are present within the NRP synthetase. OtaB has the following architecture: A-T-C-A.</text>
</comment>
<comment type="disruption phenotype">
    <text evidence="3 5">Abolishes the production of ochratoxin A and accumulates the intermediate ochratoxin beta.</text>
</comment>
<comment type="biotechnology">
    <text evidence="7">Stilbenes such as resveratrol, piceatannol and pterostilbene affect the expression of the OTA cluster to reduce ochratoxin A and B production and thus could be used as naturally safe and efficient compounds in food active packaging or preservatives against ochratoxin A in food (PubMed:35082059). Pterostilbene with methoxy groups demonstrated greater inhibitory and antitoxic activity than resveratrol and piceatannol (PubMed:35082059).</text>
</comment>
<comment type="similarity">
    <text evidence="10">Belongs to the NRP synthetase family.</text>
</comment>